<feature type="chain" id="PRO_0000291806" description="Mitochondrial glycine transporter">
    <location>
        <begin position="1"/>
        <end position="302"/>
    </location>
</feature>
<feature type="transmembrane region" description="Helical; Name=1" evidence="3">
    <location>
        <begin position="28"/>
        <end position="53"/>
    </location>
</feature>
<feature type="transmembrane region" description="Helical; Name=2" evidence="3">
    <location>
        <begin position="87"/>
        <end position="113"/>
    </location>
</feature>
<feature type="transmembrane region" description="Helical; Name=3" evidence="3">
    <location>
        <begin position="125"/>
        <end position="150"/>
    </location>
</feature>
<feature type="transmembrane region" description="Helical; Name=4" evidence="3">
    <location>
        <begin position="178"/>
        <end position="201"/>
    </location>
</feature>
<feature type="transmembrane region" description="Helical; Name=5" evidence="3">
    <location>
        <begin position="217"/>
        <end position="243"/>
    </location>
</feature>
<feature type="transmembrane region" description="Helical; Name=6" evidence="3">
    <location>
        <begin position="272"/>
        <end position="290"/>
    </location>
</feature>
<feature type="repeat" description="Solcar 1" evidence="3">
    <location>
        <begin position="22"/>
        <end position="112"/>
    </location>
</feature>
<feature type="repeat" description="Solcar 2" evidence="3">
    <location>
        <begin position="119"/>
        <end position="203"/>
    </location>
</feature>
<feature type="repeat" description="Solcar 3" evidence="3">
    <location>
        <begin position="213"/>
        <end position="297"/>
    </location>
</feature>
<keyword id="KW-0472">Membrane</keyword>
<keyword id="KW-0496">Mitochondrion</keyword>
<keyword id="KW-0999">Mitochondrion inner membrane</keyword>
<keyword id="KW-1185">Reference proteome</keyword>
<keyword id="KW-0677">Repeat</keyword>
<keyword id="KW-0812">Transmembrane</keyword>
<keyword id="KW-1133">Transmembrane helix</keyword>
<keyword id="KW-0813">Transport</keyword>
<comment type="function">
    <text evidence="3">Mitochondrial glycine transporter that imports glycine into the mitochondrial matrix. Plays an important role in providing glycine for the first enzymatic step in heme biosynthesis, the condensation of glycine with succinyl-CoA to produce 5-aminolevulinate (ALA) in the mitochondrial matrix. Required during erythropoiesis.</text>
</comment>
<comment type="function">
    <text evidence="1">May play a role as pro-apoptotic protein that induces caspase-dependent apoptosis.</text>
</comment>
<comment type="catalytic activity">
    <reaction evidence="2">
        <text>glycine(in) = glycine(out)</text>
        <dbReference type="Rhea" id="RHEA:70715"/>
        <dbReference type="ChEBI" id="CHEBI:57305"/>
    </reaction>
</comment>
<comment type="subcellular location">
    <subcellularLocation>
        <location evidence="3">Mitochondrion inner membrane</location>
        <topology evidence="3">Multi-pass membrane protein</topology>
    </subcellularLocation>
</comment>
<comment type="similarity">
    <text evidence="3">Belongs to the mitochondrial carrier (TC 2.A.29) family. SLC25A38 subfamily.</text>
</comment>
<proteinExistence type="evidence at transcript level"/>
<sequence length="302" mass="33172">MSNALVVAGDSLVPSNRVSQMHPVFKAFVCGSLSGTCSTLLFQPLDLVKTRIQAHQLSASAAGSRPRMLNLLIKVVRNENILGLWKGVSPSFLRCIPGVGLYFSTLYTLKHHFFSERDPKPLESVMLGAGSRTVAAVCMLPFTVVKTRYESGKYGYNSVYGALKAIYKTEGPRGLFSGLTATLMRDAPFSGIYLMFYTRAKKLAPHDQIDPLFSPVLNFSCGIVAGILASVATQPADVIKTHMQLANEKYHWTGKVALNIYRTQGLTGFFQGGVPRALRRTLMAAMAWTVYEQMMEKMGLKS</sequence>
<reference key="1">
    <citation type="submission" date="2004-07" db="EMBL/GenBank/DDBJ databases">
        <authorList>
            <consortium name="NIH - Xenopus Gene Collection (XGC) project"/>
        </authorList>
    </citation>
    <scope>NUCLEOTIDE SEQUENCE [LARGE SCALE MRNA]</scope>
    <source>
        <tissue>Embryo</tissue>
    </source>
</reference>
<accession>Q6DE75</accession>
<name>S2538_XENLA</name>
<dbReference type="EMBL" id="BC077266">
    <property type="protein sequence ID" value="AAH77266.1"/>
    <property type="molecule type" value="mRNA"/>
</dbReference>
<dbReference type="SMR" id="Q6DE75"/>
<dbReference type="OrthoDB" id="1924968at2759"/>
<dbReference type="Proteomes" id="UP000186698">
    <property type="component" value="Unplaced"/>
</dbReference>
<dbReference type="GO" id="GO:0005743">
    <property type="term" value="C:mitochondrial inner membrane"/>
    <property type="evidence" value="ECO:0007669"/>
    <property type="project" value="UniProtKB-SubCell"/>
</dbReference>
<dbReference type="GO" id="GO:0005739">
    <property type="term" value="C:mitochondrion"/>
    <property type="evidence" value="ECO:0000318"/>
    <property type="project" value="GO_Central"/>
</dbReference>
<dbReference type="GO" id="GO:0015187">
    <property type="term" value="F:glycine transmembrane transporter activity"/>
    <property type="evidence" value="ECO:0000318"/>
    <property type="project" value="GO_Central"/>
</dbReference>
<dbReference type="GO" id="GO:0030218">
    <property type="term" value="P:erythrocyte differentiation"/>
    <property type="evidence" value="ECO:0000250"/>
    <property type="project" value="UniProtKB"/>
</dbReference>
<dbReference type="GO" id="GO:1904983">
    <property type="term" value="P:glycine import into mitochondrion"/>
    <property type="evidence" value="ECO:0000318"/>
    <property type="project" value="GO_Central"/>
</dbReference>
<dbReference type="FunFam" id="1.50.40.10:FF:000100">
    <property type="entry name" value="Mitochondrial glycine transporter"/>
    <property type="match status" value="1"/>
</dbReference>
<dbReference type="FunFam" id="1.50.40.10:FF:000118">
    <property type="entry name" value="Mitochondrial glycine transporter"/>
    <property type="match status" value="1"/>
</dbReference>
<dbReference type="Gene3D" id="1.50.40.10">
    <property type="entry name" value="Mitochondrial carrier domain"/>
    <property type="match status" value="2"/>
</dbReference>
<dbReference type="HAMAP" id="MF_03064">
    <property type="entry name" value="SLC25A38"/>
    <property type="match status" value="1"/>
</dbReference>
<dbReference type="InterPro" id="IPR030847">
    <property type="entry name" value="Hem25/SLC25A38"/>
</dbReference>
<dbReference type="InterPro" id="IPR018108">
    <property type="entry name" value="Mitochondrial_sb/sol_carrier"/>
</dbReference>
<dbReference type="InterPro" id="IPR023395">
    <property type="entry name" value="Mt_carrier_dom_sf"/>
</dbReference>
<dbReference type="PANTHER" id="PTHR46181">
    <property type="entry name" value="MITOCHONDRIAL GLYCINE TRANSPORTER"/>
    <property type="match status" value="1"/>
</dbReference>
<dbReference type="PANTHER" id="PTHR46181:SF3">
    <property type="entry name" value="MITOCHONDRIAL GLYCINE TRANSPORTER"/>
    <property type="match status" value="1"/>
</dbReference>
<dbReference type="Pfam" id="PF00153">
    <property type="entry name" value="Mito_carr"/>
    <property type="match status" value="3"/>
</dbReference>
<dbReference type="SUPFAM" id="SSF103506">
    <property type="entry name" value="Mitochondrial carrier"/>
    <property type="match status" value="1"/>
</dbReference>
<dbReference type="PROSITE" id="PS50920">
    <property type="entry name" value="SOLCAR"/>
    <property type="match status" value="3"/>
</dbReference>
<gene>
    <name evidence="3" type="primary">slc25a38</name>
</gene>
<protein>
    <recommendedName>
        <fullName evidence="3">Mitochondrial glycine transporter</fullName>
    </recommendedName>
    <alternativeName>
        <fullName evidence="3">Solute carrier family 25 member 38</fullName>
    </alternativeName>
</protein>
<organism>
    <name type="scientific">Xenopus laevis</name>
    <name type="common">African clawed frog</name>
    <dbReference type="NCBI Taxonomy" id="8355"/>
    <lineage>
        <taxon>Eukaryota</taxon>
        <taxon>Metazoa</taxon>
        <taxon>Chordata</taxon>
        <taxon>Craniata</taxon>
        <taxon>Vertebrata</taxon>
        <taxon>Euteleostomi</taxon>
        <taxon>Amphibia</taxon>
        <taxon>Batrachia</taxon>
        <taxon>Anura</taxon>
        <taxon>Pipoidea</taxon>
        <taxon>Pipidae</taxon>
        <taxon>Xenopodinae</taxon>
        <taxon>Xenopus</taxon>
        <taxon>Xenopus</taxon>
    </lineage>
</organism>
<evidence type="ECO:0000250" key="1">
    <source>
        <dbReference type="UniProtKB" id="Q91XD8"/>
    </source>
</evidence>
<evidence type="ECO:0000250" key="2">
    <source>
        <dbReference type="UniProtKB" id="Q96DW6"/>
    </source>
</evidence>
<evidence type="ECO:0000255" key="3">
    <source>
        <dbReference type="HAMAP-Rule" id="MF_03064"/>
    </source>
</evidence>